<proteinExistence type="predicted"/>
<feature type="chain" id="PRO_0000104086" description="Uncharacterized protein Mb2896">
    <location>
        <begin position="1"/>
        <end position="85"/>
    </location>
</feature>
<feature type="region of interest" description="Disordered" evidence="1">
    <location>
        <begin position="37"/>
        <end position="60"/>
    </location>
</feature>
<keyword id="KW-1185">Reference proteome</keyword>
<accession>P0A5H0</accession>
<accession>A0A1R3Y2L6</accession>
<accession>Q10799</accession>
<accession>X2BM36</accession>
<organism>
    <name type="scientific">Mycobacterium bovis (strain ATCC BAA-935 / AF2122/97)</name>
    <dbReference type="NCBI Taxonomy" id="233413"/>
    <lineage>
        <taxon>Bacteria</taxon>
        <taxon>Bacillati</taxon>
        <taxon>Actinomycetota</taxon>
        <taxon>Actinomycetes</taxon>
        <taxon>Mycobacteriales</taxon>
        <taxon>Mycobacteriaceae</taxon>
        <taxon>Mycobacterium</taxon>
        <taxon>Mycobacterium tuberculosis complex</taxon>
    </lineage>
</organism>
<evidence type="ECO:0000256" key="1">
    <source>
        <dbReference type="SAM" id="MobiDB-lite"/>
    </source>
</evidence>
<sequence>MRTTIRIDDELYREVKAKAARSGRTVAAVLEDAVRRGLNPPKPQAAGRYRVQPSGKGGLRPGVDLSSNAALAEAMNDGVSVDAVR</sequence>
<gene>
    <name type="ordered locus">BQ2027_MB2896</name>
</gene>
<reference key="1">
    <citation type="journal article" date="2003" name="Proc. Natl. Acad. Sci. U.S.A.">
        <title>The complete genome sequence of Mycobacterium bovis.</title>
        <authorList>
            <person name="Garnier T."/>
            <person name="Eiglmeier K."/>
            <person name="Camus J.-C."/>
            <person name="Medina N."/>
            <person name="Mansoor H."/>
            <person name="Pryor M."/>
            <person name="Duthoy S."/>
            <person name="Grondin S."/>
            <person name="Lacroix C."/>
            <person name="Monsempe C."/>
            <person name="Simon S."/>
            <person name="Harris B."/>
            <person name="Atkin R."/>
            <person name="Doggett J."/>
            <person name="Mayes R."/>
            <person name="Keating L."/>
            <person name="Wheeler P.R."/>
            <person name="Parkhill J."/>
            <person name="Barrell B.G."/>
            <person name="Cole S.T."/>
            <person name="Gordon S.V."/>
            <person name="Hewinson R.G."/>
        </authorList>
    </citation>
    <scope>NUCLEOTIDE SEQUENCE [LARGE SCALE GENOMIC DNA]</scope>
    <source>
        <strain>ATCC BAA-935 / AF2122/97</strain>
    </source>
</reference>
<reference key="2">
    <citation type="journal article" date="2017" name="Genome Announc.">
        <title>Updated reference genome sequence and annotation of Mycobacterium bovis AF2122/97.</title>
        <authorList>
            <person name="Malone K.M."/>
            <person name="Farrell D."/>
            <person name="Stuber T.P."/>
            <person name="Schubert O.T."/>
            <person name="Aebersold R."/>
            <person name="Robbe-Austerman S."/>
            <person name="Gordon S.V."/>
        </authorList>
    </citation>
    <scope>NUCLEOTIDE SEQUENCE [LARGE SCALE GENOMIC DNA]</scope>
    <scope>GENOME REANNOTATION</scope>
    <source>
        <strain>ATCC BAA-935 / AF2122/97</strain>
    </source>
</reference>
<name>Y2896_MYCBO</name>
<protein>
    <recommendedName>
        <fullName>Uncharacterized protein Mb2896</fullName>
    </recommendedName>
</protein>
<dbReference type="EMBL" id="LT708304">
    <property type="protein sequence ID" value="SIU01517.1"/>
    <property type="molecule type" value="Genomic_DNA"/>
</dbReference>
<dbReference type="RefSeq" id="NP_856541.1">
    <property type="nucleotide sequence ID" value="NC_002945.3"/>
</dbReference>
<dbReference type="RefSeq" id="WP_003414620.1">
    <property type="nucleotide sequence ID" value="NC_002945.4"/>
</dbReference>
<dbReference type="SMR" id="P0A5H0"/>
<dbReference type="KEGG" id="mbo:BQ2027_MB2896"/>
<dbReference type="PATRIC" id="fig|233413.5.peg.3178"/>
<dbReference type="Proteomes" id="UP000001419">
    <property type="component" value="Chromosome"/>
</dbReference>
<dbReference type="GO" id="GO:0006355">
    <property type="term" value="P:regulation of DNA-templated transcription"/>
    <property type="evidence" value="ECO:0007669"/>
    <property type="project" value="InterPro"/>
</dbReference>
<dbReference type="CDD" id="cd21631">
    <property type="entry name" value="RHH_CopG_NikR-like"/>
    <property type="match status" value="1"/>
</dbReference>
<dbReference type="InterPro" id="IPR002145">
    <property type="entry name" value="CopG"/>
</dbReference>
<dbReference type="InterPro" id="IPR010985">
    <property type="entry name" value="Ribbon_hlx_hlx"/>
</dbReference>
<dbReference type="Pfam" id="PF01402">
    <property type="entry name" value="RHH_1"/>
    <property type="match status" value="1"/>
</dbReference>
<dbReference type="SUPFAM" id="SSF47598">
    <property type="entry name" value="Ribbon-helix-helix"/>
    <property type="match status" value="1"/>
</dbReference>